<accession>Q20435</accession>
<dbReference type="EMBL" id="BX284606">
    <property type="protein sequence ID" value="CAA92180.1"/>
    <property type="molecule type" value="Genomic_DNA"/>
</dbReference>
<dbReference type="PIR" id="T22229">
    <property type="entry name" value="T22229"/>
</dbReference>
<dbReference type="RefSeq" id="NP_510094.1">
    <property type="nucleotide sequence ID" value="NM_077693.7"/>
</dbReference>
<dbReference type="SMR" id="Q20435"/>
<dbReference type="DIP" id="DIP-26021N"/>
<dbReference type="FunCoup" id="Q20435">
    <property type="interactions" value="2215"/>
</dbReference>
<dbReference type="IntAct" id="Q20435">
    <property type="interactions" value="4"/>
</dbReference>
<dbReference type="STRING" id="6239.F45E6.2.1"/>
<dbReference type="PaxDb" id="6239-F45E6.2"/>
<dbReference type="EnsemblMetazoa" id="F45E6.2.1">
    <property type="protein sequence ID" value="F45E6.2.1"/>
    <property type="gene ID" value="WBGene00000222"/>
</dbReference>
<dbReference type="GeneID" id="181405"/>
<dbReference type="KEGG" id="cel:CELE_F45E6.2"/>
<dbReference type="UCSC" id="F45E6.2">
    <property type="organism name" value="c. elegans"/>
</dbReference>
<dbReference type="AGR" id="WB:WBGene00000222"/>
<dbReference type="CTD" id="181405"/>
<dbReference type="WormBase" id="F45E6.2">
    <property type="protein sequence ID" value="CE17828"/>
    <property type="gene ID" value="WBGene00000222"/>
    <property type="gene designation" value="atf-6"/>
</dbReference>
<dbReference type="eggNOG" id="KOG4343">
    <property type="taxonomic scope" value="Eukaryota"/>
</dbReference>
<dbReference type="GeneTree" id="ENSGT00940000175065"/>
<dbReference type="HOGENOM" id="CLU_451479_0_0_1"/>
<dbReference type="InParanoid" id="Q20435"/>
<dbReference type="OMA" id="IERWVQV"/>
<dbReference type="OrthoDB" id="644067at2759"/>
<dbReference type="PhylomeDB" id="Q20435"/>
<dbReference type="Reactome" id="R-CEL-381033">
    <property type="pathway name" value="ATF6 (ATF6-alpha) activates chaperones"/>
</dbReference>
<dbReference type="Reactome" id="R-CEL-8874177">
    <property type="pathway name" value="ATF6B (ATF6-beta) activates chaperones"/>
</dbReference>
<dbReference type="PRO" id="PR:Q20435"/>
<dbReference type="Proteomes" id="UP000001940">
    <property type="component" value="Chromosome X"/>
</dbReference>
<dbReference type="Bgee" id="WBGene00000222">
    <property type="expression patterns" value="Expressed in pharyngeal muscle cell (C elegans) and 4 other cell types or tissues"/>
</dbReference>
<dbReference type="GO" id="GO:0005783">
    <property type="term" value="C:endoplasmic reticulum"/>
    <property type="evidence" value="ECO:0007669"/>
    <property type="project" value="GOC"/>
</dbReference>
<dbReference type="GO" id="GO:0016020">
    <property type="term" value="C:membrane"/>
    <property type="evidence" value="ECO:0007669"/>
    <property type="project" value="UniProtKB-SubCell"/>
</dbReference>
<dbReference type="GO" id="GO:0005634">
    <property type="term" value="C:nucleus"/>
    <property type="evidence" value="ECO:0000318"/>
    <property type="project" value="GO_Central"/>
</dbReference>
<dbReference type="GO" id="GO:0000981">
    <property type="term" value="F:DNA-binding transcription factor activity, RNA polymerase II-specific"/>
    <property type="evidence" value="ECO:0000318"/>
    <property type="project" value="GO_Central"/>
</dbReference>
<dbReference type="GO" id="GO:0000978">
    <property type="term" value="F:RNA polymerase II cis-regulatory region sequence-specific DNA binding"/>
    <property type="evidence" value="ECO:0000318"/>
    <property type="project" value="GO_Central"/>
</dbReference>
<dbReference type="GO" id="GO:0000977">
    <property type="term" value="F:RNA polymerase II transcription regulatory region sequence-specific DNA binding"/>
    <property type="evidence" value="ECO:0000314"/>
    <property type="project" value="WormBase"/>
</dbReference>
<dbReference type="GO" id="GO:0036500">
    <property type="term" value="P:ATF6-mediated unfolded protein response"/>
    <property type="evidence" value="ECO:0000315"/>
    <property type="project" value="WormBase"/>
</dbReference>
<dbReference type="GO" id="GO:0008340">
    <property type="term" value="P:determination of adult lifespan"/>
    <property type="evidence" value="ECO:0000315"/>
    <property type="project" value="UniProtKB"/>
</dbReference>
<dbReference type="GO" id="GO:0032469">
    <property type="term" value="P:endoplasmic reticulum calcium ion homeostasis"/>
    <property type="evidence" value="ECO:0000315"/>
    <property type="project" value="UniProtKB"/>
</dbReference>
<dbReference type="GO" id="GO:0030968">
    <property type="term" value="P:endoplasmic reticulum unfolded protein response"/>
    <property type="evidence" value="ECO:0000315"/>
    <property type="project" value="UniProtKB"/>
</dbReference>
<dbReference type="GO" id="GO:0045944">
    <property type="term" value="P:positive regulation of transcription by RNA polymerase II"/>
    <property type="evidence" value="ECO:0000315"/>
    <property type="project" value="UniProtKB"/>
</dbReference>
<dbReference type="GO" id="GO:0006357">
    <property type="term" value="P:regulation of transcription by RNA polymerase II"/>
    <property type="evidence" value="ECO:0000318"/>
    <property type="project" value="GO_Central"/>
</dbReference>
<dbReference type="GO" id="GO:0035966">
    <property type="term" value="P:response to topologically incorrect protein"/>
    <property type="evidence" value="ECO:0000315"/>
    <property type="project" value="WormBase"/>
</dbReference>
<dbReference type="CDD" id="cd14686">
    <property type="entry name" value="bZIP"/>
    <property type="match status" value="1"/>
</dbReference>
<dbReference type="Gene3D" id="1.20.5.170">
    <property type="match status" value="1"/>
</dbReference>
<dbReference type="InterPro" id="IPR051882">
    <property type="entry name" value="ATF_bZIP_TF"/>
</dbReference>
<dbReference type="InterPro" id="IPR004827">
    <property type="entry name" value="bZIP"/>
</dbReference>
<dbReference type="InterPro" id="IPR046347">
    <property type="entry name" value="bZIP_sf"/>
</dbReference>
<dbReference type="PANTHER" id="PTHR46164">
    <property type="entry name" value="ATF6, ISOFORM C"/>
    <property type="match status" value="1"/>
</dbReference>
<dbReference type="PANTHER" id="PTHR46164:SF3">
    <property type="entry name" value="ATF6, ISOFORM C"/>
    <property type="match status" value="1"/>
</dbReference>
<dbReference type="Pfam" id="PF07716">
    <property type="entry name" value="bZIP_2"/>
    <property type="match status" value="1"/>
</dbReference>
<dbReference type="SMART" id="SM00338">
    <property type="entry name" value="BRLZ"/>
    <property type="match status" value="1"/>
</dbReference>
<dbReference type="SUPFAM" id="SSF57959">
    <property type="entry name" value="Leucine zipper domain"/>
    <property type="match status" value="1"/>
</dbReference>
<dbReference type="PROSITE" id="PS50217">
    <property type="entry name" value="BZIP"/>
    <property type="match status" value="1"/>
</dbReference>
<name>ATF6H_CAEEL</name>
<evidence type="ECO:0000250" key="1">
    <source>
        <dbReference type="UniProtKB" id="P18850"/>
    </source>
</evidence>
<evidence type="ECO:0000255" key="2"/>
<evidence type="ECO:0000255" key="3">
    <source>
        <dbReference type="PROSITE-ProRule" id="PRU00978"/>
    </source>
</evidence>
<evidence type="ECO:0000256" key="4">
    <source>
        <dbReference type="SAM" id="MobiDB-lite"/>
    </source>
</evidence>
<evidence type="ECO:0000269" key="5">
    <source>
    </source>
</evidence>
<evidence type="ECO:0000269" key="6">
    <source>
    </source>
</evidence>
<evidence type="ECO:0000269" key="7">
    <source>
    </source>
</evidence>
<evidence type="ECO:0000269" key="8">
    <source>
    </source>
</evidence>
<evidence type="ECO:0000269" key="9">
    <source>
    </source>
</evidence>
<evidence type="ECO:0000303" key="10">
    <source>
    </source>
</evidence>
<evidence type="ECO:0000305" key="11"/>
<evidence type="ECO:0000312" key="12">
    <source>
        <dbReference type="Proteomes" id="UP000001940"/>
    </source>
</evidence>
<evidence type="ECO:0000312" key="13">
    <source>
        <dbReference type="WormBase" id="F45E6.2"/>
    </source>
</evidence>
<feature type="chain" id="PRO_0000456083" description="Transcription factor atf-6 homolog">
    <location>
        <begin position="1"/>
        <end position="589"/>
    </location>
</feature>
<feature type="transmembrane region" description="Helical" evidence="2">
    <location>
        <begin position="324"/>
        <end position="344"/>
    </location>
</feature>
<feature type="domain" description="bZIP" evidence="3">
    <location>
        <begin position="250"/>
        <end position="299"/>
    </location>
</feature>
<feature type="region of interest" description="Disordered" evidence="4">
    <location>
        <begin position="1"/>
        <end position="82"/>
    </location>
</feature>
<feature type="region of interest" description="Basic motif" evidence="3">
    <location>
        <begin position="252"/>
        <end position="275"/>
    </location>
</feature>
<feature type="region of interest" description="Leucine-zipper" evidence="3">
    <location>
        <begin position="281"/>
        <end position="295"/>
    </location>
</feature>
<feature type="coiled-coil region" evidence="2">
    <location>
        <begin position="271"/>
        <end position="305"/>
    </location>
</feature>
<feature type="compositionally biased region" description="Basic and acidic residues" evidence="4">
    <location>
        <begin position="1"/>
        <end position="16"/>
    </location>
</feature>
<feature type="compositionally biased region" description="Low complexity" evidence="4">
    <location>
        <begin position="36"/>
        <end position="54"/>
    </location>
</feature>
<feature type="compositionally biased region" description="Low complexity" evidence="4">
    <location>
        <begin position="67"/>
        <end position="78"/>
    </location>
</feature>
<proteinExistence type="evidence at protein level"/>
<sequence length="589" mass="67377">MNFDNTVHESNFDDLLHNPNFPPQFDQLELDSLLYGTDESQESTSSSSFGFSDQNAGFRSRDGGSLGDSSSDSSPPLSCANFTENDQEMWDFGFQSRSPFENFEQQFGSPYQDDEVIAEPTNEFMNARYLREEPAKHLPMQQKRIITILPKQSQPVKRIVSRPIQKVYRVKESPGSQQQTYRVVQPLMPSPSQATQRQIKQMYYNEPVQEIHMQPKSGPLVRQVSEEPRYVPIAPTVDIKAEPQVFTSEQNRKIRNRMYAQASRMRKKEADEHMKMNLQELLQENEILRTENAALKQRLAFFEHEEPVVEVPQPFGRNQKKKRIIAAGSVLMMFGLFAVISPFNVDNNLNINNQIMAISNETSMVARHGRVITYEDSAPVAKIPTQQPIHNYPNSTQNDCDMYKLNATETIRVNNDIERWVQVHSFDNVPMKFSGGLLNKEAMRKFNYAQKVKPASVYGPQTLAVQKKSEQAALRSRERTWKQLDLLKTGNNIQLDNEKIQRKRQDIDKIASIVRQKGDTLYIMTLQDYVLLPSLIKGANSVPKLSLLLPSVPMNGTLQDQYTLLRVDCEVTGTGQLTLSNKQLSYLMP</sequence>
<gene>
    <name evidence="13" type="primary">atf-6</name>
    <name evidence="13" type="ORF">F45E6.2</name>
</gene>
<reference evidence="12" key="1">
    <citation type="journal article" date="1998" name="Science">
        <title>Genome sequence of the nematode C. elegans: a platform for investigating biology.</title>
        <authorList>
            <consortium name="The C. elegans sequencing consortium"/>
        </authorList>
    </citation>
    <scope>NUCLEOTIDE SEQUENCE [LARGE SCALE GENOMIC DNA]</scope>
    <source>
        <strain evidence="12">Bristol N2</strain>
    </source>
</reference>
<reference evidence="11" key="2">
    <citation type="journal article" date="2005" name="PLoS Genet.">
        <title>Genetic interactions due to constitutive and inducible gene regulation mediated by the unfolded protein response in C. elegans.</title>
        <authorList>
            <person name="Shen X."/>
            <person name="Ellis R.E."/>
            <person name="Sakaki K."/>
            <person name="Kaufman R.J."/>
        </authorList>
    </citation>
    <scope>FUNCTION</scope>
    <scope>DISRUPTION PHENOTYPE</scope>
</reference>
<reference evidence="11" key="3">
    <citation type="journal article" date="2010" name="Mol. Cell. Biol.">
        <title>Protein misfolding induces hypoxic preconditioning via a subset of the unfolded protein response machinery.</title>
        <authorList>
            <person name="Mao X.R."/>
            <person name="Crowder C.M."/>
        </authorList>
    </citation>
    <scope>FUNCTION</scope>
</reference>
<reference evidence="11" key="4">
    <citation type="journal article" date="2015" name="J. Cell. Biochem.">
        <title>miR-124/ATF-6, a novel lifespan extension pathway of Astragalus polysaccharide in Caenorhabditis elegans.</title>
        <authorList>
            <person name="Wang N."/>
            <person name="Liu J."/>
            <person name="Xie F."/>
            <person name="Gao X."/>
            <person name="Ye J.H."/>
            <person name="Sun L.Y."/>
            <person name="Wei R."/>
            <person name="Ai J."/>
        </authorList>
    </citation>
    <scope>FUNCTION</scope>
    <scope>REPRESSION BY MIR-124</scope>
    <scope>DISRUPTION PHENOTYPE</scope>
</reference>
<reference evidence="11" key="5">
    <citation type="journal article" date="2019" name="Nat. Commun.">
        <title>Constitutive XBP-1s-mediated activation of the endoplasmic reticulum unfolded protein response protects against pathological tau.</title>
        <authorList>
            <person name="Waldherr S.M."/>
            <person name="Strovas T.J."/>
            <person name="Vadset T.A."/>
            <person name="Liachko N.F."/>
            <person name="Kraemer B.C."/>
        </authorList>
    </citation>
    <scope>FUNCTION</scope>
</reference>
<reference evidence="11" key="6">
    <citation type="journal article" date="2020" name="Cell Rep.">
        <title>Atf-6 Regulates Lifespan through ER-Mitochondrial Calcium Homeostasis.</title>
        <authorList>
            <person name="Burkewitz K."/>
            <person name="Feng G."/>
            <person name="Dutta S."/>
            <person name="Kelley C.A."/>
            <person name="Steinbaugh M."/>
            <person name="Cram E.J."/>
            <person name="Mair W.B."/>
        </authorList>
    </citation>
    <scope>FUNCTION</scope>
</reference>
<comment type="function">
    <text evidence="1 5 6 7 8 9 10">Transcription factor (By similarity). Plays a role in the unfolded protein response (UPR), perhaps mainly during constitutive endoplasmic reticulum (ER) stress, by activating transcription of genes involved in the UPR (PubMed:16184190). Plays a role in modulating lifespan, acting by positively regulating expression of calcium-binding chaperone crt-1, thereby influencing ER calcium homeostasis (PubMed:25186652, PubMed:32905769). By activating the UPR pathway, confers adaptive protection to subsequent exposure to hypoxia (PubMed:20733002). Involved in protection against proteotoxicity, probably acting via the UPR (PubMed:31570707). Probably acts in the UPR in parallel with the ire-1-xbp-1 and pek-1 pathways (PubMed:16184190). May be regulated by endopeptidase S2P-mediated proteolytic cleavage (PubMed:16184190).</text>
</comment>
<comment type="subcellular location">
    <subcellularLocation>
        <location evidence="3">Nucleus</location>
    </subcellularLocation>
    <subcellularLocation>
        <location evidence="2">Membrane</location>
        <topology evidence="2">Single-pass membrane protein</topology>
    </subcellularLocation>
</comment>
<comment type="induction">
    <text evidence="7">Expression is repressed by micro-RNA mir-124 (at protein level).</text>
</comment>
<comment type="disruption phenotype">
    <text evidence="5 7">RNAi-mediated knockdown causes lifespan extension (PubMed:25186652). Knockdown causes no obvious other phenotypes, but in an ire-1 mutant background causes sluggish movement, arrested development at the L2 larval stage, and lethality soon thereafter; larvae have intestinal degeneration and develop many vacuoles in the intestinal cells (PubMed:16184190). In combination with RNAi-mediated knockdown of xbp-1, causes lethality early in larval development (PubMed:16184190).</text>
</comment>
<comment type="similarity">
    <text evidence="11">Belongs to the bZIP family. ATF subfamily.</text>
</comment>
<keyword id="KW-0175">Coiled coil</keyword>
<keyword id="KW-0238">DNA-binding</keyword>
<keyword id="KW-0472">Membrane</keyword>
<keyword id="KW-0539">Nucleus</keyword>
<keyword id="KW-1185">Reference proteome</keyword>
<keyword id="KW-0804">Transcription</keyword>
<keyword id="KW-0805">Transcription regulation</keyword>
<keyword id="KW-0812">Transmembrane</keyword>
<keyword id="KW-1133">Transmembrane helix</keyword>
<organism evidence="12">
    <name type="scientific">Caenorhabditis elegans</name>
    <dbReference type="NCBI Taxonomy" id="6239"/>
    <lineage>
        <taxon>Eukaryota</taxon>
        <taxon>Metazoa</taxon>
        <taxon>Ecdysozoa</taxon>
        <taxon>Nematoda</taxon>
        <taxon>Chromadorea</taxon>
        <taxon>Rhabditida</taxon>
        <taxon>Rhabditina</taxon>
        <taxon>Rhabditomorpha</taxon>
        <taxon>Rhabditoidea</taxon>
        <taxon>Rhabditidae</taxon>
        <taxon>Peloderinae</taxon>
        <taxon>Caenorhabditis</taxon>
    </lineage>
</organism>
<protein>
    <recommendedName>
        <fullName evidence="10">Transcription factor atf-6 homolog</fullName>
    </recommendedName>
    <alternativeName>
        <fullName evidence="11">Cyclic AMP-dependent transcription factor ATF-6 homolog</fullName>
    </alternativeName>
</protein>